<evidence type="ECO:0000250" key="1"/>
<evidence type="ECO:0000250" key="2">
    <source>
        <dbReference type="UniProtKB" id="P14873"/>
    </source>
</evidence>
<evidence type="ECO:0000250" key="3">
    <source>
        <dbReference type="UniProtKB" id="P46821"/>
    </source>
</evidence>
<evidence type="ECO:0000256" key="4">
    <source>
        <dbReference type="SAM" id="MobiDB-lite"/>
    </source>
</evidence>
<evidence type="ECO:0000269" key="5">
    <source>
    </source>
</evidence>
<evidence type="ECO:0000269" key="6">
    <source>
    </source>
</evidence>
<evidence type="ECO:0000269" key="7">
    <source>
    </source>
</evidence>
<evidence type="ECO:0000305" key="8"/>
<evidence type="ECO:0000312" key="9">
    <source>
        <dbReference type="EMBL" id="AAI58859.1"/>
    </source>
</evidence>
<evidence type="ECO:0007744" key="10">
    <source>
    </source>
</evidence>
<evidence type="ECO:0007744" key="11">
    <source>
    </source>
</evidence>
<gene>
    <name type="primary">Map1b</name>
</gene>
<proteinExistence type="evidence at protein level"/>
<name>MAP1B_RAT</name>
<keyword id="KW-0007">Acetylation</keyword>
<keyword id="KW-0966">Cell projection</keyword>
<keyword id="KW-0963">Cytoplasm</keyword>
<keyword id="KW-0206">Cytoskeleton</keyword>
<keyword id="KW-0488">Methylation</keyword>
<keyword id="KW-0493">Microtubule</keyword>
<keyword id="KW-0597">Phosphoprotein</keyword>
<keyword id="KW-1185">Reference proteome</keyword>
<keyword id="KW-0677">Repeat</keyword>
<keyword id="KW-0702">S-nitrosylation</keyword>
<keyword id="KW-0770">Synapse</keyword>
<accession>P15205</accession>
<accession>B0BNK3</accession>
<accession>F1LRL9</accession>
<accession>Q62958</accession>
<accession>Q9ER21</accession>
<accession>Q9QW92</accession>
<sequence length="2461" mass="269643">MATVVVEATEPEPSGSIGNPAATTSPSLSHRFLDSKFYLLVVVGETVTEEHLRRAIGNIELGIRSWDTNLIECNLDQELKLFVSRHSARFSPEVPGQKILHHRSDVLETVVLINPSDEAVSTEVRLMITDAARHKLLVLTGQCFENTGELILQSGSFSFQNFIEIFTDQEIGELLSTTHPANKASLTLFCPEEGDWKNSNLDRHNLQDFINIKLNSASILPEMEGLSEFTEYLSESVEVPSPFDILEPPTSGGFLKLSKPCCYIFPGGRGDSALFAVNGFNMLINGGSERKSCFWKLIRHLDRVDSILLTHIGDDNLPGINSMLQRKIAELEEERSQGSTSNSDWMKNLISPDLGVVFLNVPENLKNPEPNIKMKRSTEEACFTLQYLNKLSMKPEPLFRSVGNAIEPVILFQKMGVGKLEMYVLNPVKSSKEMQYFMQQWTGTNKDKAELILPNGQEVDIPISYLTSVSSLIVWHPANPAEKIIRVLFPGNSTQYNILEGLEKLKHLDFLKQPLATQKDLTGQVSTPPVKQVKLKQRADSRESLKPATKPLSSKSVRKESKEEAPEATKASQVEKTPKVESKEKVIVKKDKPGKVESKPSVTEKEVPSKEEQSPVKAEVAEKAATESKPKVTKDKVVKKEIKTKPEEKKEEKPKKEVAKKEDKTPLKKDEKPKKEEAKKEIKKEIKKEEKKELKKEVKKETPLKDAKKEVKKDEKKEVKKEEKEPKKEIKKISKDIKKSTPLSDTKKPAALKPKVAKKEEPTKKEPIAAGKLKDKGKVKVIKKEGKTTEAAATAVGTAAVAAAAGVAASGPAKELEAERSLMSSPEDLTKDFEELKAEEIDVAKDIKPQLELIEDEEKLKETEPGEAYVIQKETEVSKGSAESPDEGITTTEGEGECEQTPEELEPVEKQGVDDIEKFEDEGAGFEESSEAGDYEEKAETEEAEEPEEDGEDNVSGSASKHSPTEDEEIAKAEADVHIKEKRESVASGDDRAEEDMDEALEKGEAEQSEEEGEEEEDKAEDAREEDHEPDKTEAEDYVMAVVDKAAEAGVTEDQYGFLGTPAKQPGVQSPSREPASSIHDETLPGGSESEATASDEENREDQPEEFTATSGYTQSTIEISSEPTPMDEMSTPRDVMSDETNNEETESPSQEFVNITKYESSLYSQEYSKPVVASFNGLSDGSKTDATDGRDYNASASTISPPSSMEEDKFSKSALRDAYRPEETDVKTGAELDIKDVSDERLSPAKSPSLSPSPPSPIEKTPLGERSVNFSLTPNEIKASAEGEATAVVSPGVTQAVVEEHCASPEEKTLEVVSPSQSVTGSAGHTPYYQSPTDEKSSHLPTEVTEKPQAVPVSFEFTEAKDENERSSISPMDEPVPDSESPIEKVLSPLRSPPLIGSESAYEDFLSADDKALGRRSESPFEGKNGKQGFSDKESPVSDLTSDLYQDKQEEKSAGFIPIKEDFSPEKKASDAEIMSSQSALALDERKLGGDGSPTQVDVSQFGSFKEDTKMSISEGTVSDKSATPVDEGVAEDTYSHMEGVASVSTASVATSSFPEPTTDDVSPSLHAEVGSPHSTEVDDSLSVSVVQTPTTFQETEMSPSKEECPRPMSISPPDFSPKTAKSRTPVQDHRSEQSSMSIEFGQESPEHSLAMDFSRQSPDHPTVGAGMLHITENGPTEVDYSPSDIQDSSLSHKIPPTEEPSYTQDNDLSELISVSQVEASPSTSSAHTPSQIASPLQEDTLSDVVPPRDMSLYASLASEKVQSLEGEKLSPKSDISPLTPRESSPTYSPGFSDSTSGAKESTAAYQTSSSPPIDAAAAEPYGFRSSMLFDTMQHHLALSRDLTTSSVEKDNGGKTPGDFNYAYQKPESTTESPDEEDYDYESHEKTIQAHDVGGYYYEKTERTIKSPCDSGYSYETIEKTTKTPEDGGYSCEITEKTTRTPEEGGYSYEISEKTTRTPEVSGYTYEKTERSRRLLDDISNGYDDTEDGGHTLGDCSYSYETTEKITSFPESESYSYETTTKTTRSPDTSAYCYETMEKITKTPQASTYSYETSDRCYTPERKSPSEARQDVDLCLVSSCEFKHPKTELSPSFINPNPLEWFAGEEPTEESEKPLTQSGGAPPPSGGKQQGRQCDETPPTSVSESAPSQTDSDVPPETEECPSITADANIDSEDESETIPTDKTVTYKHMDPPPAPMQDRSPSPRHPDVSMVDPEALAIEQNLGKALKKDLKEKAKTKKPGTKTKSSSPVKKGDGKSKPSAASPKPGALKESSDKVSRVASPKKKESVEKAMKTTTTPEVKATRGEEKDKETKNAANASASKSVKTATAGPGTTKTAKSSTVPPGLPVYLDLCYIPNHSNSKNVDVEFFKRVRSSYYVVSGNDPAAEEPSRAVLDALLEGKAQWGSNMQVTLIPTHDSEVMREWYQETHEKQQDLNIMVLASSSTVVMQDESFPACKIEL</sequence>
<reference key="1">
    <citation type="journal article" date="2004" name="Nature">
        <title>Genome sequence of the Brown Norway rat yields insights into mammalian evolution.</title>
        <authorList>
            <person name="Gibbs R.A."/>
            <person name="Weinstock G.M."/>
            <person name="Metzker M.L."/>
            <person name="Muzny D.M."/>
            <person name="Sodergren E.J."/>
            <person name="Scherer S."/>
            <person name="Scott G."/>
            <person name="Steffen D."/>
            <person name="Worley K.C."/>
            <person name="Burch P.E."/>
            <person name="Okwuonu G."/>
            <person name="Hines S."/>
            <person name="Lewis L."/>
            <person name="Deramo C."/>
            <person name="Delgado O."/>
            <person name="Dugan-Rocha S."/>
            <person name="Miner G."/>
            <person name="Morgan M."/>
            <person name="Hawes A."/>
            <person name="Gill R."/>
            <person name="Holt R.A."/>
            <person name="Adams M.D."/>
            <person name="Amanatides P.G."/>
            <person name="Baden-Tillson H."/>
            <person name="Barnstead M."/>
            <person name="Chin S."/>
            <person name="Evans C.A."/>
            <person name="Ferriera S."/>
            <person name="Fosler C."/>
            <person name="Glodek A."/>
            <person name="Gu Z."/>
            <person name="Jennings D."/>
            <person name="Kraft C.L."/>
            <person name="Nguyen T."/>
            <person name="Pfannkoch C.M."/>
            <person name="Sitter C."/>
            <person name="Sutton G.G."/>
            <person name="Venter J.C."/>
            <person name="Woodage T."/>
            <person name="Smith D."/>
            <person name="Lee H.-M."/>
            <person name="Gustafson E."/>
            <person name="Cahill P."/>
            <person name="Kana A."/>
            <person name="Doucette-Stamm L."/>
            <person name="Weinstock K."/>
            <person name="Fechtel K."/>
            <person name="Weiss R.B."/>
            <person name="Dunn D.M."/>
            <person name="Green E.D."/>
            <person name="Blakesley R.W."/>
            <person name="Bouffard G.G."/>
            <person name="De Jong P.J."/>
            <person name="Osoegawa K."/>
            <person name="Zhu B."/>
            <person name="Marra M."/>
            <person name="Schein J."/>
            <person name="Bosdet I."/>
            <person name="Fjell C."/>
            <person name="Jones S."/>
            <person name="Krzywinski M."/>
            <person name="Mathewson C."/>
            <person name="Siddiqui A."/>
            <person name="Wye N."/>
            <person name="McPherson J."/>
            <person name="Zhao S."/>
            <person name="Fraser C.M."/>
            <person name="Shetty J."/>
            <person name="Shatsman S."/>
            <person name="Geer K."/>
            <person name="Chen Y."/>
            <person name="Abramzon S."/>
            <person name="Nierman W.C."/>
            <person name="Havlak P.H."/>
            <person name="Chen R."/>
            <person name="Durbin K.J."/>
            <person name="Egan A."/>
            <person name="Ren Y."/>
            <person name="Song X.-Z."/>
            <person name="Li B."/>
            <person name="Liu Y."/>
            <person name="Qin X."/>
            <person name="Cawley S."/>
            <person name="Cooney A.J."/>
            <person name="D'Souza L.M."/>
            <person name="Martin K."/>
            <person name="Wu J.Q."/>
            <person name="Gonzalez-Garay M.L."/>
            <person name="Jackson A.R."/>
            <person name="Kalafus K.J."/>
            <person name="McLeod M.P."/>
            <person name="Milosavljevic A."/>
            <person name="Virk D."/>
            <person name="Volkov A."/>
            <person name="Wheeler D.A."/>
            <person name="Zhang Z."/>
            <person name="Bailey J.A."/>
            <person name="Eichler E.E."/>
            <person name="Tuzun E."/>
            <person name="Birney E."/>
            <person name="Mongin E."/>
            <person name="Ureta-Vidal A."/>
            <person name="Woodwark C."/>
            <person name="Zdobnov E."/>
            <person name="Bork P."/>
            <person name="Suyama M."/>
            <person name="Torrents D."/>
            <person name="Alexandersson M."/>
            <person name="Trask B.J."/>
            <person name="Young J.M."/>
            <person name="Huang H."/>
            <person name="Wang H."/>
            <person name="Xing H."/>
            <person name="Daniels S."/>
            <person name="Gietzen D."/>
            <person name="Schmidt J."/>
            <person name="Stevens K."/>
            <person name="Vitt U."/>
            <person name="Wingrove J."/>
            <person name="Camara F."/>
            <person name="Mar Alba M."/>
            <person name="Abril J.F."/>
            <person name="Guigo R."/>
            <person name="Smit A."/>
            <person name="Dubchak I."/>
            <person name="Rubin E.M."/>
            <person name="Couronne O."/>
            <person name="Poliakov A."/>
            <person name="Huebner N."/>
            <person name="Ganten D."/>
            <person name="Goesele C."/>
            <person name="Hummel O."/>
            <person name="Kreitler T."/>
            <person name="Lee Y.-A."/>
            <person name="Monti J."/>
            <person name="Schulz H."/>
            <person name="Zimdahl H."/>
            <person name="Himmelbauer H."/>
            <person name="Lehrach H."/>
            <person name="Jacob H.J."/>
            <person name="Bromberg S."/>
            <person name="Gullings-Handley J."/>
            <person name="Jensen-Seaman M.I."/>
            <person name="Kwitek A.E."/>
            <person name="Lazar J."/>
            <person name="Pasko D."/>
            <person name="Tonellato P.J."/>
            <person name="Twigger S."/>
            <person name="Ponting C.P."/>
            <person name="Duarte J.M."/>
            <person name="Rice S."/>
            <person name="Goodstadt L."/>
            <person name="Beatson S.A."/>
            <person name="Emes R.D."/>
            <person name="Winter E.E."/>
            <person name="Webber C."/>
            <person name="Brandt P."/>
            <person name="Nyakatura G."/>
            <person name="Adetobi M."/>
            <person name="Chiaromonte F."/>
            <person name="Elnitski L."/>
            <person name="Eswara P."/>
            <person name="Hardison R.C."/>
            <person name="Hou M."/>
            <person name="Kolbe D."/>
            <person name="Makova K."/>
            <person name="Miller W."/>
            <person name="Nekrutenko A."/>
            <person name="Riemer C."/>
            <person name="Schwartz S."/>
            <person name="Taylor J."/>
            <person name="Yang S."/>
            <person name="Zhang Y."/>
            <person name="Lindpaintner K."/>
            <person name="Andrews T.D."/>
            <person name="Caccamo M."/>
            <person name="Clamp M."/>
            <person name="Clarke L."/>
            <person name="Curwen V."/>
            <person name="Durbin R.M."/>
            <person name="Eyras E."/>
            <person name="Searle S.M."/>
            <person name="Cooper G.M."/>
            <person name="Batzoglou S."/>
            <person name="Brudno M."/>
            <person name="Sidow A."/>
            <person name="Stone E.A."/>
            <person name="Payseur B.A."/>
            <person name="Bourque G."/>
            <person name="Lopez-Otin C."/>
            <person name="Puente X.S."/>
            <person name="Chakrabarti K."/>
            <person name="Chatterji S."/>
            <person name="Dewey C."/>
            <person name="Pachter L."/>
            <person name="Bray N."/>
            <person name="Yap V.B."/>
            <person name="Caspi A."/>
            <person name="Tesler G."/>
            <person name="Pevzner P.A."/>
            <person name="Haussler D."/>
            <person name="Roskin K.M."/>
            <person name="Baertsch R."/>
            <person name="Clawson H."/>
            <person name="Furey T.S."/>
            <person name="Hinrichs A.S."/>
            <person name="Karolchik D."/>
            <person name="Kent W.J."/>
            <person name="Rosenbloom K.R."/>
            <person name="Trumbower H."/>
            <person name="Weirauch M."/>
            <person name="Cooper D.N."/>
            <person name="Stenson P.D."/>
            <person name="Ma B."/>
            <person name="Brent M."/>
            <person name="Arumugam M."/>
            <person name="Shteynberg D."/>
            <person name="Copley R.R."/>
            <person name="Taylor M.S."/>
            <person name="Riethman H."/>
            <person name="Mudunuri U."/>
            <person name="Peterson J."/>
            <person name="Guyer M."/>
            <person name="Felsenfeld A."/>
            <person name="Old S."/>
            <person name="Mockrin S."/>
            <person name="Collins F.S."/>
        </authorList>
    </citation>
    <scope>NUCLEOTIDE SEQUENCE [LARGE SCALE GENOMIC DNA]</scope>
    <source>
        <strain>Brown Norway</strain>
    </source>
</reference>
<reference key="2">
    <citation type="journal article" date="2004" name="Genome Res.">
        <title>The status, quality, and expansion of the NIH full-length cDNA project: the Mammalian Gene Collection (MGC).</title>
        <authorList>
            <consortium name="The MGC Project Team"/>
        </authorList>
    </citation>
    <scope>NUCLEOTIDE SEQUENCE [LARGE SCALE MRNA] OF 1-691</scope>
    <source>
        <tissue evidence="9">Prostate</tissue>
    </source>
</reference>
<reference key="3">
    <citation type="journal article" date="1996" name="Gene">
        <title>Isolation and sequencing of the 5' end of the rat microtubule-associated protein (MAP1B)-encoding cDNA.</title>
        <authorList>
            <person name="Liu D."/>
            <person name="Fischer I."/>
        </authorList>
    </citation>
    <scope>NUCLEOTIDE SEQUENCE [MRNA] OF 1-142</scope>
    <source>
        <strain>Sprague-Dawley</strain>
        <tissue>Testis</tissue>
    </source>
</reference>
<reference key="4">
    <citation type="journal article" date="1992" name="Eur. J. Cell Biol.">
        <title>Identification of two distinct microtubule binding domains on recombinant rat MAP 1B.</title>
        <authorList>
            <person name="Zauner W."/>
            <person name="Kratz J."/>
            <person name="Staunton J."/>
            <person name="Feick P."/>
            <person name="Wiche G."/>
        </authorList>
    </citation>
    <scope>NUCLEOTIDE SEQUENCE [MRNA] OF 96-2461</scope>
    <scope>DOMAIN</scope>
    <scope>INDUCTION</scope>
    <source>
        <strain>Sprague-Dawley</strain>
        <tissue>Brain</tissue>
        <tissue>Glial tumor</tissue>
    </source>
</reference>
<reference key="5">
    <citation type="journal article" date="1989" name="EMBO J.">
        <title>Neuraxin, a novel putative structural protein of the rat central nervous system that is immunologically related to microtubule-associated protein 5.</title>
        <authorList>
            <person name="Rienitz A."/>
            <person name="Grenningloh G."/>
            <person name="Hermans-Borgmeyer I."/>
            <person name="Kirsch J."/>
            <person name="Littauer U.Z."/>
            <person name="Prior P."/>
            <person name="Gundelfinger E.D."/>
            <person name="Schmitt B."/>
            <person name="Betz H."/>
        </authorList>
    </citation>
    <scope>NUCLEOTIDE SEQUENCE [MRNA] OF 1545-2461</scope>
    <scope>TISSUE SPECIFICITY</scope>
    <source>
        <tissue>Spinal cord</tissue>
    </source>
</reference>
<reference key="6">
    <citation type="journal article" date="1997" name="J. Neurosci. Res.">
        <title>Differential regulation of microtubule-associated protein 1B (MAP1B) in rat CNS and PNS during development.</title>
        <authorList>
            <person name="Ma D."/>
            <person name="Nothias F."/>
            <person name="Boyne L.J."/>
            <person name="Fischer I."/>
        </authorList>
    </citation>
    <scope>DEVELOPMENTAL STAGE</scope>
    <scope>PHOSPHORYLATION</scope>
</reference>
<reference key="7">
    <citation type="journal article" date="2006" name="Proc. Natl. Acad. Sci. U.S.A.">
        <title>Quantitative phosphoproteomics of vasopressin-sensitive renal cells: regulation of aquaporin-2 phosphorylation at two sites.</title>
        <authorList>
            <person name="Hoffert J.D."/>
            <person name="Pisitkun T."/>
            <person name="Wang G."/>
            <person name="Shen R.-F."/>
            <person name="Knepper M.A."/>
        </authorList>
    </citation>
    <scope>PHOSPHORYLATION [LARGE SCALE ANALYSIS] AT SER-1908</scope>
    <scope>IDENTIFICATION BY MASS SPECTROMETRY [LARGE SCALE ANALYSIS]</scope>
</reference>
<reference key="8">
    <citation type="journal article" date="2012" name="Nat. Commun.">
        <title>Quantitative maps of protein phosphorylation sites across 14 different rat organs and tissues.</title>
        <authorList>
            <person name="Lundby A."/>
            <person name="Secher A."/>
            <person name="Lage K."/>
            <person name="Nordsborg N.B."/>
            <person name="Dmytriyev A."/>
            <person name="Lundby C."/>
            <person name="Olsen J.V."/>
        </authorList>
    </citation>
    <scope>PHOSPHORYLATION [LARGE SCALE ANALYSIS] AT SER-336; SER-339; SER-341; SER-343; THR-527; SER-541; SER-821; SER-824; SER-825; SER-929; SER-930; THR-941; SER-956; SER-963; SER-985; SER-988; SER-1009; SER-1180; SER-1183; SER-1201; SER-1239; SER-1244; SER-1248; SER-1250; SER-1252; SER-1254; SER-1257; THR-1274; SER-1315; SER-1323; SER-1371; SER-1382; SER-1393; SER-1420; SER-1436; SER-1494; SER-1505; SER-1513; SER-1515; THR-1518; SER-1520; SER-1613; SER-1618; SER-1646; SER-1656; SER-1659; SER-1765; SER-1772; SER-1778; THR-1781; SER-1812; SER-1870; SER-1874; SER-1908; THR-1925; THR-1942 AND SER-2027</scope>
    <scope>IDENTIFICATION BY MASS SPECTROMETRY [LARGE SCALE ANALYSIS]</scope>
</reference>
<feature type="initiator methionine" description="Removed" evidence="3">
    <location>
        <position position="1"/>
    </location>
</feature>
<feature type="chain" id="PRO_0000018608" description="Microtubule-associated protein 1B">
    <location>
        <begin position="2"/>
        <end position="2461"/>
    </location>
</feature>
<feature type="chain" id="PRO_0000418381" description="MAP1B heavy chain">
    <location>
        <begin position="2"/>
        <end position="2199"/>
    </location>
</feature>
<feature type="chain" id="PRO_0000018609" description="MAP1 light chain LC1">
    <location>
        <begin position="2200"/>
        <end position="2461"/>
    </location>
</feature>
<feature type="repeat" description="MAP1B 1" evidence="8">
    <location>
        <begin position="1871"/>
        <end position="1887"/>
    </location>
</feature>
<feature type="repeat" description="MAP1B 2" evidence="8">
    <location>
        <begin position="1888"/>
        <end position="1904"/>
    </location>
</feature>
<feature type="repeat" description="MAP1B 3" evidence="8">
    <location>
        <begin position="1905"/>
        <end position="1921"/>
    </location>
</feature>
<feature type="repeat" description="MAP1B 4" evidence="8">
    <location>
        <begin position="1922"/>
        <end position="1938"/>
    </location>
</feature>
<feature type="repeat" description="MAP1B 5" evidence="8">
    <location>
        <begin position="1939"/>
        <end position="1955"/>
    </location>
</feature>
<feature type="repeat" description="MAP1B 6" evidence="8">
    <location>
        <begin position="1956"/>
        <end position="1972"/>
    </location>
</feature>
<feature type="repeat" description="MAP1B 7" evidence="8">
    <location>
        <begin position="1990"/>
        <end position="2006"/>
    </location>
</feature>
<feature type="repeat" description="MAP1B 8" evidence="8">
    <location>
        <begin position="2007"/>
        <end position="2023"/>
    </location>
</feature>
<feature type="repeat" description="MAP1B 9" evidence="8">
    <location>
        <begin position="2024"/>
        <end position="2040"/>
    </location>
</feature>
<feature type="repeat" description="MAP1B 10" evidence="8">
    <location>
        <begin position="2041"/>
        <end position="2057"/>
    </location>
</feature>
<feature type="region of interest" description="Disordered" evidence="4">
    <location>
        <begin position="1"/>
        <end position="22"/>
    </location>
</feature>
<feature type="region of interest" description="Disordered" evidence="4">
    <location>
        <begin position="522"/>
        <end position="772"/>
    </location>
</feature>
<feature type="region of interest" description="Disordered" evidence="4">
    <location>
        <begin position="856"/>
        <end position="1154"/>
    </location>
</feature>
<feature type="region of interest" description="Disordered" evidence="4">
    <location>
        <begin position="1175"/>
        <end position="1277"/>
    </location>
</feature>
<feature type="region of interest" description="Disordered" evidence="4">
    <location>
        <begin position="1299"/>
        <end position="1749"/>
    </location>
</feature>
<feature type="region of interest" description="Disordered" evidence="4">
    <location>
        <begin position="1762"/>
        <end position="1819"/>
    </location>
</feature>
<feature type="region of interest" description="Disordered" evidence="4">
    <location>
        <begin position="1843"/>
        <end position="1884"/>
    </location>
</feature>
<feature type="region of interest" description="Disordered" evidence="4">
    <location>
        <begin position="1921"/>
        <end position="1969"/>
    </location>
</feature>
<feature type="region of interest" description="Disordered" evidence="4">
    <location>
        <begin position="2009"/>
        <end position="2029"/>
    </location>
</feature>
<feature type="region of interest" description="Disordered" evidence="4">
    <location>
        <begin position="2045"/>
        <end position="2071"/>
    </location>
</feature>
<feature type="region of interest" description="Disordered" evidence="4">
    <location>
        <begin position="2087"/>
        <end position="2343"/>
    </location>
</feature>
<feature type="region of interest" description="Mediates interaction with TMEM185A" evidence="3">
    <location>
        <begin position="2287"/>
        <end position="2459"/>
    </location>
</feature>
<feature type="compositionally biased region" description="Basic and acidic residues" evidence="4">
    <location>
        <begin position="557"/>
        <end position="567"/>
    </location>
</feature>
<feature type="compositionally biased region" description="Basic and acidic residues" evidence="4">
    <location>
        <begin position="576"/>
        <end position="739"/>
    </location>
</feature>
<feature type="compositionally biased region" description="Basic and acidic residues" evidence="4">
    <location>
        <begin position="757"/>
        <end position="772"/>
    </location>
</feature>
<feature type="compositionally biased region" description="Acidic residues" evidence="4">
    <location>
        <begin position="894"/>
        <end position="906"/>
    </location>
</feature>
<feature type="compositionally biased region" description="Basic and acidic residues" evidence="4">
    <location>
        <begin position="907"/>
        <end position="916"/>
    </location>
</feature>
<feature type="compositionally biased region" description="Acidic residues" evidence="4">
    <location>
        <begin position="917"/>
        <end position="953"/>
    </location>
</feature>
<feature type="compositionally biased region" description="Basic and acidic residues" evidence="4">
    <location>
        <begin position="970"/>
        <end position="991"/>
    </location>
</feature>
<feature type="compositionally biased region" description="Acidic residues" evidence="4">
    <location>
        <begin position="1007"/>
        <end position="1020"/>
    </location>
</feature>
<feature type="compositionally biased region" description="Basic and acidic residues" evidence="4">
    <location>
        <begin position="1021"/>
        <end position="1035"/>
    </location>
</feature>
<feature type="compositionally biased region" description="Acidic residues" evidence="4">
    <location>
        <begin position="1094"/>
        <end position="1105"/>
    </location>
</feature>
<feature type="compositionally biased region" description="Polar residues" evidence="4">
    <location>
        <begin position="1108"/>
        <end position="1124"/>
    </location>
</feature>
<feature type="compositionally biased region" description="Basic and acidic residues" evidence="4">
    <location>
        <begin position="1183"/>
        <end position="1192"/>
    </location>
</feature>
<feature type="compositionally biased region" description="Polar residues" evidence="4">
    <location>
        <begin position="1195"/>
        <end position="1204"/>
    </location>
</feature>
<feature type="compositionally biased region" description="Basic and acidic residues" evidence="4">
    <location>
        <begin position="1207"/>
        <end position="1244"/>
    </location>
</feature>
<feature type="compositionally biased region" description="Basic and acidic residues" evidence="4">
    <location>
        <begin position="1299"/>
        <end position="1311"/>
    </location>
</feature>
<feature type="compositionally biased region" description="Polar residues" evidence="4">
    <location>
        <begin position="1315"/>
        <end position="1333"/>
    </location>
</feature>
<feature type="compositionally biased region" description="Basic and acidic residues" evidence="4">
    <location>
        <begin position="1409"/>
        <end position="1437"/>
    </location>
</feature>
<feature type="compositionally biased region" description="Basic and acidic residues" evidence="4">
    <location>
        <begin position="1446"/>
        <end position="1472"/>
    </location>
</feature>
<feature type="compositionally biased region" description="Polar residues" evidence="4">
    <location>
        <begin position="1494"/>
        <end position="1504"/>
    </location>
</feature>
<feature type="compositionally biased region" description="Polar residues" evidence="4">
    <location>
        <begin position="1512"/>
        <end position="1523"/>
    </location>
</feature>
<feature type="compositionally biased region" description="Low complexity" evidence="4">
    <location>
        <begin position="1542"/>
        <end position="1554"/>
    </location>
</feature>
<feature type="compositionally biased region" description="Polar residues" evidence="4">
    <location>
        <begin position="1583"/>
        <end position="1600"/>
    </location>
</feature>
<feature type="compositionally biased region" description="Polar residues" evidence="4">
    <location>
        <begin position="1702"/>
        <end position="1720"/>
    </location>
</feature>
<feature type="compositionally biased region" description="Low complexity" evidence="4">
    <location>
        <begin position="1721"/>
        <end position="1732"/>
    </location>
</feature>
<feature type="compositionally biased region" description="Polar residues" evidence="4">
    <location>
        <begin position="1783"/>
        <end position="1813"/>
    </location>
</feature>
<feature type="compositionally biased region" description="Basic and acidic residues" evidence="4">
    <location>
        <begin position="1935"/>
        <end position="1944"/>
    </location>
</feature>
<feature type="compositionally biased region" description="Low complexity" evidence="4">
    <location>
        <begin position="2009"/>
        <end position="2025"/>
    </location>
</feature>
<feature type="compositionally biased region" description="Basic and acidic residues" evidence="4">
    <location>
        <begin position="2054"/>
        <end position="2071"/>
    </location>
</feature>
<feature type="compositionally biased region" description="Polar residues" evidence="4">
    <location>
        <begin position="2139"/>
        <end position="2153"/>
    </location>
</feature>
<feature type="compositionally biased region" description="Basic and acidic residues" evidence="4">
    <location>
        <begin position="2272"/>
        <end position="2293"/>
    </location>
</feature>
<feature type="compositionally biased region" description="Basic and acidic residues" evidence="4">
    <location>
        <begin position="2302"/>
        <end position="2314"/>
    </location>
</feature>
<feature type="compositionally biased region" description="Low complexity" evidence="4">
    <location>
        <begin position="2315"/>
        <end position="2339"/>
    </location>
</feature>
<feature type="modified residue" description="N-acetylalanine" evidence="3">
    <location>
        <position position="2"/>
    </location>
</feature>
<feature type="modified residue" description="Phosphoserine" evidence="11">
    <location>
        <position position="336"/>
    </location>
</feature>
<feature type="modified residue" description="Phosphoserine" evidence="11">
    <location>
        <position position="339"/>
    </location>
</feature>
<feature type="modified residue" description="Phosphoserine" evidence="11">
    <location>
        <position position="341"/>
    </location>
</feature>
<feature type="modified residue" description="Phosphoserine" evidence="11">
    <location>
        <position position="343"/>
    </location>
</feature>
<feature type="modified residue" description="Phosphothreonine" evidence="11">
    <location>
        <position position="527"/>
    </location>
</feature>
<feature type="modified residue" description="Phosphoserine" evidence="11">
    <location>
        <position position="541"/>
    </location>
</feature>
<feature type="modified residue" description="Phosphoserine" evidence="2">
    <location>
        <position position="544"/>
    </location>
</feature>
<feature type="modified residue" description="Phosphoserine" evidence="2">
    <location>
        <position position="561"/>
    </location>
</feature>
<feature type="modified residue" description="Phosphoserine" evidence="3">
    <location>
        <position position="614"/>
    </location>
</feature>
<feature type="modified residue" description="Phosphoserine" evidence="11">
    <location>
        <position position="821"/>
    </location>
</feature>
<feature type="modified residue" description="Phosphoserine" evidence="11">
    <location>
        <position position="824"/>
    </location>
</feature>
<feature type="modified residue" description="Phosphoserine" evidence="11">
    <location>
        <position position="825"/>
    </location>
</feature>
<feature type="modified residue" description="Phosphoserine" evidence="2">
    <location>
        <position position="881"/>
    </location>
</feature>
<feature type="modified residue" description="Phosphoserine" evidence="2">
    <location>
        <position position="884"/>
    </location>
</feature>
<feature type="modified residue" description="Phosphothreonine" evidence="2">
    <location>
        <position position="892"/>
    </location>
</feature>
<feature type="modified residue" description="Phosphothreonine" evidence="2">
    <location>
        <position position="901"/>
    </location>
</feature>
<feature type="modified residue" description="Phosphoserine" evidence="11">
    <location>
        <position position="929"/>
    </location>
</feature>
<feature type="modified residue" description="Phosphoserine" evidence="11">
    <location>
        <position position="930"/>
    </location>
</feature>
<feature type="modified residue" description="Phosphothreonine" evidence="11">
    <location>
        <position position="941"/>
    </location>
</feature>
<feature type="modified residue" description="Phosphoserine" evidence="11">
    <location>
        <position position="956"/>
    </location>
</feature>
<feature type="modified residue" description="Phosphoserine" evidence="11">
    <location>
        <position position="963"/>
    </location>
</feature>
<feature type="modified residue" description="Phosphoserine" evidence="11">
    <location>
        <position position="985"/>
    </location>
</feature>
<feature type="modified residue" description="Phosphoserine" evidence="11">
    <location>
        <position position="988"/>
    </location>
</feature>
<feature type="modified residue" description="Phosphoserine" evidence="11">
    <location>
        <position position="1009"/>
    </location>
</feature>
<feature type="modified residue" description="Phosphoserine" evidence="3">
    <location>
        <position position="1148"/>
    </location>
</feature>
<feature type="modified residue" description="Phosphoserine" evidence="3">
    <location>
        <position position="1150"/>
    </location>
</feature>
<feature type="modified residue" description="Phosphoserine" evidence="11">
    <location>
        <position position="1180"/>
    </location>
</feature>
<feature type="modified residue" description="Phosphoserine" evidence="11">
    <location>
        <position position="1183"/>
    </location>
</feature>
<feature type="modified residue" description="Phosphoserine" evidence="11">
    <location>
        <position position="1201"/>
    </location>
</feature>
<feature type="modified residue" description="Phosphoserine" evidence="2">
    <location>
        <position position="1204"/>
    </location>
</feature>
<feature type="modified residue" description="Phosphoserine" evidence="2">
    <location>
        <position position="1205"/>
    </location>
</feature>
<feature type="modified residue" description="Phosphoserine" evidence="11">
    <location>
        <position position="1239"/>
    </location>
</feature>
<feature type="modified residue" description="Phosphoserine" evidence="11">
    <location>
        <position position="1244"/>
    </location>
</feature>
<feature type="modified residue" description="Phosphoserine" evidence="11">
    <location>
        <position position="1248"/>
    </location>
</feature>
<feature type="modified residue" description="Phosphoserine" evidence="11">
    <location>
        <position position="1250"/>
    </location>
</feature>
<feature type="modified residue" description="Phosphoserine" evidence="11">
    <location>
        <position position="1252"/>
    </location>
</feature>
<feature type="modified residue" description="Phosphoserine" evidence="11">
    <location>
        <position position="1254"/>
    </location>
</feature>
<feature type="modified residue" description="Phosphoserine" evidence="11">
    <location>
        <position position="1257"/>
    </location>
</feature>
<feature type="modified residue" description="Phosphoserine" evidence="3">
    <location>
        <position position="1268"/>
    </location>
</feature>
<feature type="modified residue" description="Phosphoserine" evidence="3">
    <location>
        <position position="1272"/>
    </location>
</feature>
<feature type="modified residue" description="Phosphothreonine" evidence="11">
    <location>
        <position position="1274"/>
    </location>
</feature>
<feature type="modified residue" description="Phosphoserine" evidence="3">
    <location>
        <position position="1291"/>
    </location>
</feature>
<feature type="modified residue" description="Phosphoserine" evidence="2">
    <location>
        <position position="1305"/>
    </location>
</feature>
<feature type="modified residue" description="Phosphoserine" evidence="11">
    <location>
        <position position="1315"/>
    </location>
</feature>
<feature type="modified residue" description="Phosphoserine" evidence="2">
    <location>
        <position position="1317"/>
    </location>
</feature>
<feature type="modified residue" description="Phosphoserine" evidence="2">
    <location>
        <position position="1319"/>
    </location>
</feature>
<feature type="modified residue" description="Phosphothreonine" evidence="2">
    <location>
        <position position="1321"/>
    </location>
</feature>
<feature type="modified residue" description="Phosphoserine" evidence="11">
    <location>
        <position position="1323"/>
    </location>
</feature>
<feature type="modified residue" description="Phosphoserine" evidence="2">
    <location>
        <position position="1332"/>
    </location>
</feature>
<feature type="modified residue" description="Phosphoserine" evidence="2">
    <location>
        <position position="1369"/>
    </location>
</feature>
<feature type="modified residue" description="Phosphoserine" evidence="11">
    <location>
        <position position="1371"/>
    </location>
</feature>
<feature type="modified residue" description="Phosphoserine" evidence="3">
    <location>
        <position position="1380"/>
    </location>
</feature>
<feature type="modified residue" description="Phosphoserine" evidence="11">
    <location>
        <position position="1382"/>
    </location>
</feature>
<feature type="modified residue" description="Phosphoserine" evidence="3">
    <location>
        <position position="1389"/>
    </location>
</feature>
<feature type="modified residue" description="Phosphoserine" evidence="11">
    <location>
        <position position="1393"/>
    </location>
</feature>
<feature type="modified residue" description="Phosphoserine" evidence="2">
    <location>
        <position position="1401"/>
    </location>
</feature>
<feature type="modified residue" description="Phosphotyrosine" evidence="2">
    <location>
        <position position="1403"/>
    </location>
</feature>
<feature type="modified residue" description="Phosphoserine" evidence="11">
    <location>
        <position position="1420"/>
    </location>
</feature>
<feature type="modified residue" description="Phosphoserine" evidence="11">
    <location>
        <position position="1436"/>
    </location>
</feature>
<feature type="modified residue" description="Phosphoserine" evidence="11">
    <location>
        <position position="1494"/>
    </location>
</feature>
<feature type="modified residue" description="Phosphoserine" evidence="11">
    <location>
        <position position="1505"/>
    </location>
</feature>
<feature type="modified residue" description="Phosphoserine" evidence="11">
    <location>
        <position position="1513"/>
    </location>
</feature>
<feature type="modified residue" description="Phosphoserine" evidence="11">
    <location>
        <position position="1515"/>
    </location>
</feature>
<feature type="modified residue" description="Phosphothreonine" evidence="11">
    <location>
        <position position="1518"/>
    </location>
</feature>
<feature type="modified residue" description="Phosphoserine" evidence="11">
    <location>
        <position position="1520"/>
    </location>
</feature>
<feature type="modified residue" description="Phosphoserine" evidence="3">
    <location>
        <position position="1611"/>
    </location>
</feature>
<feature type="modified residue" description="Phosphoserine" evidence="11">
    <location>
        <position position="1613"/>
    </location>
</feature>
<feature type="modified residue" description="Phosphoserine" evidence="11">
    <location>
        <position position="1618"/>
    </location>
</feature>
<feature type="modified residue" description="Phosphoserine" evidence="11">
    <location>
        <position position="1646"/>
    </location>
</feature>
<feature type="modified residue" description="Phosphoserine" evidence="11">
    <location>
        <position position="1656"/>
    </location>
</feature>
<feature type="modified residue" description="Phosphoserine" evidence="11">
    <location>
        <position position="1659"/>
    </location>
</feature>
<feature type="modified residue" description="Phosphoserine" evidence="2">
    <location>
        <position position="1683"/>
    </location>
</feature>
<feature type="modified residue" description="Phosphoserine" evidence="11">
    <location>
        <position position="1765"/>
    </location>
</feature>
<feature type="modified residue" description="Phosphoserine" evidence="11">
    <location>
        <position position="1772"/>
    </location>
</feature>
<feature type="modified residue" description="Phosphoserine" evidence="3">
    <location>
        <position position="1775"/>
    </location>
</feature>
<feature type="modified residue" description="Phosphoserine" evidence="11">
    <location>
        <position position="1778"/>
    </location>
</feature>
<feature type="modified residue" description="Phosphothreonine" evidence="11">
    <location>
        <position position="1781"/>
    </location>
</feature>
<feature type="modified residue" description="Phosphoserine" evidence="2">
    <location>
        <position position="1785"/>
    </location>
</feature>
<feature type="modified residue" description="Phosphoserine" evidence="3">
    <location>
        <position position="1786"/>
    </location>
</feature>
<feature type="modified residue" description="Phosphotyrosine" evidence="2">
    <location>
        <position position="1789"/>
    </location>
</feature>
<feature type="modified residue" description="Phosphoserine" evidence="3">
    <location>
        <position position="1790"/>
    </location>
</feature>
<feature type="modified residue" description="Phosphoserine" evidence="2">
    <location>
        <position position="1794"/>
    </location>
</feature>
<feature type="modified residue" description="Phosphoserine" evidence="11">
    <location>
        <position position="1812"/>
    </location>
</feature>
<feature type="modified residue" description="Phosphoserine" evidence="11">
    <location>
        <position position="1870"/>
    </location>
</feature>
<feature type="modified residue" description="Phosphoserine" evidence="11">
    <location>
        <position position="1874"/>
    </location>
</feature>
<feature type="modified residue" description="Phosphoserine" evidence="10 11">
    <location>
        <position position="1908"/>
    </location>
</feature>
<feature type="modified residue" description="Phosphoserine" evidence="3">
    <location>
        <position position="1912"/>
    </location>
</feature>
<feature type="modified residue" description="Phosphothreonine" evidence="11">
    <location>
        <position position="1925"/>
    </location>
</feature>
<feature type="modified residue" description="Phosphoserine" evidence="3">
    <location>
        <position position="1932"/>
    </location>
</feature>
<feature type="modified residue" description="Phosphothreonine" evidence="11">
    <location>
        <position position="1942"/>
    </location>
</feature>
<feature type="modified residue" description="Phosphoserine" evidence="11">
    <location>
        <position position="2027"/>
    </location>
</feature>
<feature type="modified residue" description="Omega-N-methylarginine" evidence="2">
    <location>
        <position position="2057"/>
    </location>
</feature>
<feature type="modified residue" description="Phosphoserine" evidence="3">
    <location>
        <position position="2202"/>
    </location>
</feature>
<feature type="modified residue" description="Phosphoserine" evidence="3">
    <location>
        <position position="2264"/>
    </location>
</feature>
<feature type="modified residue" description="Phosphoserine" evidence="3">
    <location>
        <position position="2282"/>
    </location>
</feature>
<feature type="modified residue" description="Phosphothreonine" evidence="3">
    <location>
        <position position="2298"/>
    </location>
</feature>
<feature type="modified residue" description="Phosphoserine" evidence="2">
    <location>
        <position position="2407"/>
    </location>
</feature>
<feature type="modified residue" description="S-nitrosocysteine" evidence="2">
    <location>
        <position position="2457"/>
    </location>
</feature>
<feature type="sequence conflict" description="In Ref. 3; AAB17068." evidence="8" ref="3">
    <original>D</original>
    <variation>E</variation>
    <location>
        <position position="67"/>
    </location>
</feature>
<feature type="sequence conflict" description="In Ref. 3; AAB17068." evidence="8" ref="3">
    <original>M</original>
    <variation>V</variation>
    <location>
        <position position="127"/>
    </location>
</feature>
<feature type="sequence conflict" description="In Ref. 3; AAB17068." evidence="8" ref="3">
    <original>T</original>
    <variation>S</variation>
    <location>
        <position position="140"/>
    </location>
</feature>
<feature type="sequence conflict" description="In Ref. 4; CAC16162." evidence="8" ref="4">
    <location>
        <position position="335"/>
    </location>
</feature>
<feature type="sequence conflict" description="In Ref. 4; CAC16162." evidence="8" ref="4">
    <original>E</original>
    <variation>K</variation>
    <location>
        <position position="421"/>
    </location>
</feature>
<feature type="sequence conflict" description="In Ref. 4; CAC16162." evidence="8" ref="4">
    <original>T</original>
    <variation>A</variation>
    <location>
        <position position="467"/>
    </location>
</feature>
<feature type="sequence conflict" description="In Ref. 2; AAI58859." evidence="8" ref="2">
    <original>E</original>
    <variation>K</variation>
    <location>
        <position position="575"/>
    </location>
</feature>
<feature type="sequence conflict" description="In Ref. 4; CAC16162." evidence="8" ref="4">
    <original>G</original>
    <variation>D</variation>
    <location>
        <position position="1057"/>
    </location>
</feature>
<feature type="sequence conflict" description="In Ref. 4; CAC16162." evidence="8" ref="4">
    <original>S</original>
    <variation>T</variation>
    <location>
        <position position="1138"/>
    </location>
</feature>
<feature type="sequence conflict" description="In Ref. 4; CAC16162." evidence="8" ref="4">
    <original>KP</original>
    <variation>NA</variation>
    <location>
        <begin position="1348"/>
        <end position="1349"/>
    </location>
</feature>
<feature type="sequence conflict" description="In Ref. 4; CAC16162." evidence="8" ref="4">
    <original>S</original>
    <variation>R</variation>
    <location>
        <position position="1454"/>
    </location>
</feature>
<feature type="sequence conflict" description="In Ref. 4; CAC16162." evidence="8" ref="4">
    <location>
        <position position="1531"/>
    </location>
</feature>
<feature type="sequence conflict" description="In Ref. 4; CAC16162." evidence="8" ref="4">
    <original>K</original>
    <variation>R</variation>
    <location>
        <position position="2114"/>
    </location>
</feature>
<feature type="sequence conflict" description="In Ref. 4; CAC16162." evidence="8" ref="4">
    <original>I</original>
    <variation>L</variation>
    <location>
        <position position="2171"/>
    </location>
</feature>
<comment type="function">
    <text evidence="1 2">Required for proper microtubule dynamics. Plays a role in the cytoskeletal changes that accompany neuronal differentiation and neurite extension (By similarity). Possibly MAP1B binds to at least two tubulin subunits in the polymer, and this bridging of subunits might be involved in nucleating microtubule polymerization and in stabilizing microtubules. Acts as a positive cofactor in DAPK1-mediated autophagic vesicle formation and membrane blebbing (By similarity). Facilitates tyrosination of alpha-tubulin in neuronal microtubules. Required for synaptic maturation (By similarity).</text>
</comment>
<comment type="subunit">
    <text evidence="2 3">3 different light chains, LC1 (a cleavage product of MAP1B), LC2 (a cleavage product of MAP1A) and LC3 (produced by one of the MAP1LC3 genes), can associate with the MAP1A or MAP1B heavy chains. LC1 interacts with the amino-terminal region of MAP1B. Interacts with ANP32A and TIAM2. Interacts with the tubulin tyrosine TTL (By similarity). Interacts (via C-terminus) with GAN (via Kelch domains). Interacts (via N-terminus) with DAPK1. Interacts with TMEM185A. Interacts with MAP1LC3B. Interacts with KIRREL3 (By similarity).</text>
</comment>
<comment type="subunit">
    <molecule>MAP1 light chain LC1</molecule>
    <text evidence="2">Interacts (via C-terminus) with ELAVL4; the interaction contributes to the association of ELAVL4 with microtubules. Interacts with ELAVL2 and ELAVL3.</text>
</comment>
<comment type="interaction">
    <interactant intactId="EBI-349666">
        <id>P15205</id>
    </interactant>
    <interactant intactId="EBI-21279242">
        <id>P31388</id>
        <label>Htr6</label>
    </interactant>
    <organismsDiffer>false</organismsDiffer>
    <experiments>2</experiments>
</comment>
<comment type="subcellular location">
    <subcellularLocation>
        <location evidence="8">Cytoplasm</location>
        <location evidence="8">Cytoskeleton</location>
    </subcellularLocation>
    <subcellularLocation>
        <location evidence="1">Cytoplasm</location>
    </subcellularLocation>
    <subcellularLocation>
        <location evidence="1">Synapse</location>
    </subcellularLocation>
    <subcellularLocation>
        <location evidence="1">Cell projection</location>
        <location evidence="1">Dendritic spine</location>
    </subcellularLocation>
    <text evidence="1">Colocalizes with DAPK1 in the microtubules and cortical actin fibers.</text>
</comment>
<comment type="subcellular location">
    <molecule>MAP1 light chain LC1</molecule>
    <subcellularLocation>
        <location evidence="2">Cytoplasm</location>
    </subcellularLocation>
</comment>
<comment type="tissue specificity">
    <text evidence="6">Nervous system (spinal cord, brain stem, cerebellum and cerebrum). Not expressed in liver, spleen, kidney, heart or muscle.</text>
</comment>
<comment type="developmental stage">
    <text evidence="7">In cerebral cortex, spinal cord and sciatic nerve levels are high early in development but decrease during postnatal development and are low in adults. In dorsal root ganglia levels remain high throughout development.</text>
</comment>
<comment type="induction">
    <text evidence="5">By nerve growth factor.</text>
</comment>
<comment type="domain">
    <text evidence="5">Has a highly basic region with many copies of the sequence KKEE and KKEI/V, repeated but not at fixed intervals, which is responsible for the binding of MAP1B to microtubules.</text>
</comment>
<comment type="PTM">
    <text evidence="1">LC1 is coexpressed with MAP1B. It is a polypeptide generated from MAP1B by proteolytic processing. It is free to associate with both MAP1A and MAP1B. It interacts with the N-terminal region of MAP1B (By similarity).</text>
</comment>
<comment type="PTM">
    <text evidence="2">S-nitrosylation at Cys-2457 enhances interaction with microtubules, and may act as an effector modification for neuronal nitric oxide synthase control of growth-cone size, growth-cone collapse and axon retraction.</text>
</comment>
<comment type="similarity">
    <text evidence="8">Belongs to the MAP1 family.</text>
</comment>
<comment type="caution">
    <text evidence="8">A C-terminal fragment of this protein (residues 1599 to 2461) was originally described as neuraxin in PubMed:2555150.</text>
</comment>
<comment type="sequence caution" evidence="8">
    <conflict type="miscellaneous discrepancy">
        <sequence resource="EMBL-CDS" id="AAI58859"/>
    </conflict>
    <text>Contaminating sequence. Potential poly-A sequence.</text>
</comment>
<comment type="sequence caution" evidence="8">
    <conflict type="erroneous initiation">
        <sequence resource="EMBL-CDS" id="CAA34620"/>
    </conflict>
    <text>Truncated N-terminus.</text>
</comment>
<dbReference type="EMBL" id="AABR07007833">
    <property type="status" value="NOT_ANNOTATED_CDS"/>
    <property type="molecule type" value="Genomic_DNA"/>
</dbReference>
<dbReference type="EMBL" id="AABR07007832">
    <property type="status" value="NOT_ANNOTATED_CDS"/>
    <property type="molecule type" value="Genomic_DNA"/>
</dbReference>
<dbReference type="EMBL" id="BC158858">
    <property type="protein sequence ID" value="AAI58859.1"/>
    <property type="status" value="ALT_SEQ"/>
    <property type="molecule type" value="mRNA"/>
</dbReference>
<dbReference type="EMBL" id="U52950">
    <property type="protein sequence ID" value="AAB17068.1"/>
    <property type="molecule type" value="mRNA"/>
</dbReference>
<dbReference type="EMBL" id="X60370">
    <property type="protein sequence ID" value="CAC16162.1"/>
    <property type="molecule type" value="mRNA"/>
</dbReference>
<dbReference type="EMBL" id="X16623">
    <property type="protein sequence ID" value="CAA34620.1"/>
    <property type="status" value="ALT_INIT"/>
    <property type="molecule type" value="mRNA"/>
</dbReference>
<dbReference type="PIR" id="A56577">
    <property type="entry name" value="A56577"/>
</dbReference>
<dbReference type="RefSeq" id="NP_062090.1">
    <property type="nucleotide sequence ID" value="NM_019217.1"/>
</dbReference>
<dbReference type="BMRB" id="P15205"/>
<dbReference type="BioGRID" id="248099">
    <property type="interactions" value="14"/>
</dbReference>
<dbReference type="CORUM" id="P15205"/>
<dbReference type="FunCoup" id="P15205">
    <property type="interactions" value="1790"/>
</dbReference>
<dbReference type="IntAct" id="P15205">
    <property type="interactions" value="7"/>
</dbReference>
<dbReference type="MINT" id="P15205"/>
<dbReference type="STRING" id="10116.ENSRNOP00000023460"/>
<dbReference type="ChEMBL" id="CHEMBL3217383"/>
<dbReference type="GlyGen" id="P15205">
    <property type="glycosylation" value="1 site, 1 O-linked glycan (1 site)"/>
</dbReference>
<dbReference type="iPTMnet" id="P15205"/>
<dbReference type="PhosphoSitePlus" id="P15205"/>
<dbReference type="jPOST" id="P15205"/>
<dbReference type="PaxDb" id="10116-ENSRNOP00000023460"/>
<dbReference type="Ensembl" id="ENSRNOT00000023460.6">
    <property type="protein sequence ID" value="ENSRNOP00000023460.5"/>
    <property type="gene ID" value="ENSRNOG00000017428.6"/>
</dbReference>
<dbReference type="GeneID" id="29456"/>
<dbReference type="KEGG" id="rno:29456"/>
<dbReference type="UCSC" id="RGD:3043">
    <property type="organism name" value="rat"/>
</dbReference>
<dbReference type="AGR" id="RGD:3043"/>
<dbReference type="CTD" id="4131"/>
<dbReference type="RGD" id="3043">
    <property type="gene designation" value="Map1b"/>
</dbReference>
<dbReference type="eggNOG" id="KOG3592">
    <property type="taxonomic scope" value="Eukaryota"/>
</dbReference>
<dbReference type="GeneTree" id="ENSGT00940000155897"/>
<dbReference type="HOGENOM" id="CLU_000285_0_1_1"/>
<dbReference type="InParanoid" id="P15205"/>
<dbReference type="OMA" id="HDHRSPE"/>
<dbReference type="OrthoDB" id="80740at9989"/>
<dbReference type="PhylomeDB" id="P15205"/>
<dbReference type="TreeFam" id="TF350229"/>
<dbReference type="PRO" id="PR:P15205"/>
<dbReference type="Proteomes" id="UP000002494">
    <property type="component" value="Chromosome 2"/>
</dbReference>
<dbReference type="Bgee" id="ENSRNOG00000017428">
    <property type="expression patterns" value="Expressed in cerebellum and 19 other cell types or tissues"/>
</dbReference>
<dbReference type="GO" id="GO:0097440">
    <property type="term" value="C:apical dendrite"/>
    <property type="evidence" value="ECO:0000314"/>
    <property type="project" value="ARUK-UCL"/>
</dbReference>
<dbReference type="GO" id="GO:0030424">
    <property type="term" value="C:axon"/>
    <property type="evidence" value="ECO:0000314"/>
    <property type="project" value="UniProtKB"/>
</dbReference>
<dbReference type="GO" id="GO:0097441">
    <property type="term" value="C:basal dendrite"/>
    <property type="evidence" value="ECO:0000314"/>
    <property type="project" value="ARUK-UCL"/>
</dbReference>
<dbReference type="GO" id="GO:0005829">
    <property type="term" value="C:cytosol"/>
    <property type="evidence" value="ECO:0000266"/>
    <property type="project" value="RGD"/>
</dbReference>
<dbReference type="GO" id="GO:0030425">
    <property type="term" value="C:dendrite"/>
    <property type="evidence" value="ECO:0000314"/>
    <property type="project" value="UniProtKB"/>
</dbReference>
<dbReference type="GO" id="GO:0043197">
    <property type="term" value="C:dendritic spine"/>
    <property type="evidence" value="ECO:0007669"/>
    <property type="project" value="UniProtKB-SubCell"/>
</dbReference>
<dbReference type="GO" id="GO:0098978">
    <property type="term" value="C:glutamatergic synapse"/>
    <property type="evidence" value="ECO:0000266"/>
    <property type="project" value="RGD"/>
</dbReference>
<dbReference type="GO" id="GO:0030426">
    <property type="term" value="C:growth cone"/>
    <property type="evidence" value="ECO:0000314"/>
    <property type="project" value="RGD"/>
</dbReference>
<dbReference type="GO" id="GO:0097457">
    <property type="term" value="C:hippocampal mossy fiber"/>
    <property type="evidence" value="ECO:0000314"/>
    <property type="project" value="ARUK-UCL"/>
</dbReference>
<dbReference type="GO" id="GO:0005874">
    <property type="term" value="C:microtubule"/>
    <property type="evidence" value="ECO:0000314"/>
    <property type="project" value="ARUK-UCL"/>
</dbReference>
<dbReference type="GO" id="GO:0005875">
    <property type="term" value="C:microtubule associated complex"/>
    <property type="evidence" value="ECO:0000314"/>
    <property type="project" value="RGD"/>
</dbReference>
<dbReference type="GO" id="GO:0043025">
    <property type="term" value="C:neuronal cell body"/>
    <property type="evidence" value="ECO:0000314"/>
    <property type="project" value="ARUK-UCL"/>
</dbReference>
<dbReference type="GO" id="GO:0043204">
    <property type="term" value="C:perikaryon"/>
    <property type="evidence" value="ECO:0000314"/>
    <property type="project" value="RGD"/>
</dbReference>
<dbReference type="GO" id="GO:0048471">
    <property type="term" value="C:perinuclear region of cytoplasm"/>
    <property type="evidence" value="ECO:0000314"/>
    <property type="project" value="RGD"/>
</dbReference>
<dbReference type="GO" id="GO:0001750">
    <property type="term" value="C:photoreceptor outer segment"/>
    <property type="evidence" value="ECO:0000266"/>
    <property type="project" value="RGD"/>
</dbReference>
<dbReference type="GO" id="GO:0005886">
    <property type="term" value="C:plasma membrane"/>
    <property type="evidence" value="ECO:0000266"/>
    <property type="project" value="RGD"/>
</dbReference>
<dbReference type="GO" id="GO:0098794">
    <property type="term" value="C:postsynapse"/>
    <property type="evidence" value="ECO:0000266"/>
    <property type="project" value="RGD"/>
</dbReference>
<dbReference type="GO" id="GO:0014069">
    <property type="term" value="C:postsynaptic density"/>
    <property type="evidence" value="ECO:0000266"/>
    <property type="project" value="RGD"/>
</dbReference>
<dbReference type="GO" id="GO:0036477">
    <property type="term" value="C:somatodendritic compartment"/>
    <property type="evidence" value="ECO:0000314"/>
    <property type="project" value="ARUK-UCL"/>
</dbReference>
<dbReference type="GO" id="GO:0045202">
    <property type="term" value="C:synapse"/>
    <property type="evidence" value="ECO:0000318"/>
    <property type="project" value="GO_Central"/>
</dbReference>
<dbReference type="GO" id="GO:0043196">
    <property type="term" value="C:varicosity"/>
    <property type="evidence" value="ECO:0000314"/>
    <property type="project" value="RGD"/>
</dbReference>
<dbReference type="GO" id="GO:0003779">
    <property type="term" value="F:actin binding"/>
    <property type="evidence" value="ECO:0000314"/>
    <property type="project" value="RGD"/>
</dbReference>
<dbReference type="GO" id="GO:0008017">
    <property type="term" value="F:microtubule binding"/>
    <property type="evidence" value="ECO:0000314"/>
    <property type="project" value="ARUK-UCL"/>
</dbReference>
<dbReference type="GO" id="GO:0005543">
    <property type="term" value="F:phospholipid binding"/>
    <property type="evidence" value="ECO:0000353"/>
    <property type="project" value="RGD"/>
</dbReference>
<dbReference type="GO" id="GO:0044877">
    <property type="term" value="F:protein-containing complex binding"/>
    <property type="evidence" value="ECO:0000314"/>
    <property type="project" value="RGD"/>
</dbReference>
<dbReference type="GO" id="GO:0048675">
    <property type="term" value="P:axon extension"/>
    <property type="evidence" value="ECO:0000266"/>
    <property type="project" value="RGD"/>
</dbReference>
<dbReference type="GO" id="GO:0007409">
    <property type="term" value="P:axonogenesis"/>
    <property type="evidence" value="ECO:0000266"/>
    <property type="project" value="RGD"/>
</dbReference>
<dbReference type="GO" id="GO:0071363">
    <property type="term" value="P:cellular response to growth factor stimulus"/>
    <property type="evidence" value="ECO:0000270"/>
    <property type="project" value="RGD"/>
</dbReference>
<dbReference type="GO" id="GO:0071375">
    <property type="term" value="P:cellular response to peptide hormone stimulus"/>
    <property type="evidence" value="ECO:0000270"/>
    <property type="project" value="RGD"/>
</dbReference>
<dbReference type="GO" id="GO:0016358">
    <property type="term" value="P:dendrite development"/>
    <property type="evidence" value="ECO:0000266"/>
    <property type="project" value="RGD"/>
</dbReference>
<dbReference type="GO" id="GO:0021700">
    <property type="term" value="P:developmental maturation"/>
    <property type="evidence" value="ECO:0000270"/>
    <property type="project" value="RGD"/>
</dbReference>
<dbReference type="GO" id="GO:0061162">
    <property type="term" value="P:establishment of monopolar cell polarity"/>
    <property type="evidence" value="ECO:0000266"/>
    <property type="project" value="RGD"/>
</dbReference>
<dbReference type="GO" id="GO:0051915">
    <property type="term" value="P:induction of synaptic plasticity by chemical substance"/>
    <property type="evidence" value="ECO:0000270"/>
    <property type="project" value="RGD"/>
</dbReference>
<dbReference type="GO" id="GO:0046907">
    <property type="term" value="P:intracellular transport"/>
    <property type="evidence" value="ECO:0000266"/>
    <property type="project" value="RGD"/>
</dbReference>
<dbReference type="GO" id="GO:0001578">
    <property type="term" value="P:microtubule bundle formation"/>
    <property type="evidence" value="ECO:0000314"/>
    <property type="project" value="RGD"/>
</dbReference>
<dbReference type="GO" id="GO:0000226">
    <property type="term" value="P:microtubule cytoskeleton organization"/>
    <property type="evidence" value="ECO:0000318"/>
    <property type="project" value="GO_Central"/>
</dbReference>
<dbReference type="GO" id="GO:0047497">
    <property type="term" value="P:mitochondrion transport along microtubule"/>
    <property type="evidence" value="ECO:0000266"/>
    <property type="project" value="RGD"/>
</dbReference>
<dbReference type="GO" id="GO:0032387">
    <property type="term" value="P:negative regulation of intracellular transport"/>
    <property type="evidence" value="ECO:0000266"/>
    <property type="project" value="RGD"/>
</dbReference>
<dbReference type="GO" id="GO:0007026">
    <property type="term" value="P:negative regulation of microtubule depolymerization"/>
    <property type="evidence" value="ECO:0000314"/>
    <property type="project" value="RGD"/>
</dbReference>
<dbReference type="GO" id="GO:0007399">
    <property type="term" value="P:nervous system development"/>
    <property type="evidence" value="ECO:0000270"/>
    <property type="project" value="RGD"/>
</dbReference>
<dbReference type="GO" id="GO:0048666">
    <property type="term" value="P:neuron development"/>
    <property type="evidence" value="ECO:0000270"/>
    <property type="project" value="RGD"/>
</dbReference>
<dbReference type="GO" id="GO:0031175">
    <property type="term" value="P:neuron projection development"/>
    <property type="evidence" value="ECO:0000250"/>
    <property type="project" value="UniProtKB"/>
</dbReference>
<dbReference type="GO" id="GO:0071895">
    <property type="term" value="P:odontoblast differentiation"/>
    <property type="evidence" value="ECO:0000266"/>
    <property type="project" value="RGD"/>
</dbReference>
<dbReference type="GO" id="GO:0014012">
    <property type="term" value="P:peripheral nervous system axon regeneration"/>
    <property type="evidence" value="ECO:0000270"/>
    <property type="project" value="RGD"/>
</dbReference>
<dbReference type="GO" id="GO:0045773">
    <property type="term" value="P:positive regulation of axon extension"/>
    <property type="evidence" value="ECO:0000315"/>
    <property type="project" value="RGD"/>
</dbReference>
<dbReference type="GO" id="GO:0031116">
    <property type="term" value="P:positive regulation of microtubule polymerization"/>
    <property type="evidence" value="ECO:0000314"/>
    <property type="project" value="RGD"/>
</dbReference>
<dbReference type="GO" id="GO:0045666">
    <property type="term" value="P:positive regulation of neuron differentiation"/>
    <property type="evidence" value="ECO:0000315"/>
    <property type="project" value="RGD"/>
</dbReference>
<dbReference type="GO" id="GO:0031114">
    <property type="term" value="P:regulation of microtubule depolymerization"/>
    <property type="evidence" value="ECO:0000318"/>
    <property type="project" value="GO_Central"/>
</dbReference>
<dbReference type="GO" id="GO:0150052">
    <property type="term" value="P:regulation of postsynapse assembly"/>
    <property type="evidence" value="ECO:0000266"/>
    <property type="project" value="RGD"/>
</dbReference>
<dbReference type="GO" id="GO:0048678">
    <property type="term" value="P:response to axon injury"/>
    <property type="evidence" value="ECO:0000270"/>
    <property type="project" value="RGD"/>
</dbReference>
<dbReference type="GO" id="GO:0009743">
    <property type="term" value="P:response to carbohydrate"/>
    <property type="evidence" value="ECO:0000270"/>
    <property type="project" value="RGD"/>
</dbReference>
<dbReference type="GO" id="GO:0032355">
    <property type="term" value="P:response to estradiol"/>
    <property type="evidence" value="ECO:0000270"/>
    <property type="project" value="RGD"/>
</dbReference>
<dbReference type="GO" id="GO:0017085">
    <property type="term" value="P:response to insecticide"/>
    <property type="evidence" value="ECO:0000270"/>
    <property type="project" value="RGD"/>
</dbReference>
<dbReference type="GO" id="GO:0009612">
    <property type="term" value="P:response to mechanical stimulus"/>
    <property type="evidence" value="ECO:0000270"/>
    <property type="project" value="RGD"/>
</dbReference>
<dbReference type="GO" id="GO:0031667">
    <property type="term" value="P:response to nutrient levels"/>
    <property type="evidence" value="ECO:0000270"/>
    <property type="project" value="RGD"/>
</dbReference>
<dbReference type="GO" id="GO:0033189">
    <property type="term" value="P:response to vitamin A"/>
    <property type="evidence" value="ECO:0000270"/>
    <property type="project" value="RGD"/>
</dbReference>
<dbReference type="GO" id="GO:0009410">
    <property type="term" value="P:response to xenobiotic stimulus"/>
    <property type="evidence" value="ECO:0000270"/>
    <property type="project" value="RGD"/>
</dbReference>
<dbReference type="GO" id="GO:0007416">
    <property type="term" value="P:synapse assembly"/>
    <property type="evidence" value="ECO:0000270"/>
    <property type="project" value="RGD"/>
</dbReference>
<dbReference type="InterPro" id="IPR026074">
    <property type="entry name" value="MAP1"/>
</dbReference>
<dbReference type="InterPro" id="IPR056617">
    <property type="entry name" value="MAP1B/S_N"/>
</dbReference>
<dbReference type="InterPro" id="IPR000102">
    <property type="entry name" value="MAP1B_neuraxin"/>
</dbReference>
<dbReference type="PANTHER" id="PTHR13843">
    <property type="entry name" value="MICROTUBULE-ASSOCIATED PROTEIN"/>
    <property type="match status" value="1"/>
</dbReference>
<dbReference type="PANTHER" id="PTHR13843:SF5">
    <property type="entry name" value="MICROTUBULE-ASSOCIATED PROTEIN 1B"/>
    <property type="match status" value="1"/>
</dbReference>
<dbReference type="Pfam" id="PF00414">
    <property type="entry name" value="MAP1B_neuraxin"/>
    <property type="match status" value="5"/>
</dbReference>
<dbReference type="Pfam" id="PF23415">
    <property type="entry name" value="MAPB1_N"/>
    <property type="match status" value="1"/>
</dbReference>
<dbReference type="Pfam" id="PF25281">
    <property type="entry name" value="MBL_MAP1B"/>
    <property type="match status" value="1"/>
</dbReference>
<dbReference type="PROSITE" id="PS00230">
    <property type="entry name" value="MAP1B_NEURAXIN"/>
    <property type="match status" value="8"/>
</dbReference>
<organism>
    <name type="scientific">Rattus norvegicus</name>
    <name type="common">Rat</name>
    <dbReference type="NCBI Taxonomy" id="10116"/>
    <lineage>
        <taxon>Eukaryota</taxon>
        <taxon>Metazoa</taxon>
        <taxon>Chordata</taxon>
        <taxon>Craniata</taxon>
        <taxon>Vertebrata</taxon>
        <taxon>Euteleostomi</taxon>
        <taxon>Mammalia</taxon>
        <taxon>Eutheria</taxon>
        <taxon>Euarchontoglires</taxon>
        <taxon>Glires</taxon>
        <taxon>Rodentia</taxon>
        <taxon>Myomorpha</taxon>
        <taxon>Muroidea</taxon>
        <taxon>Muridae</taxon>
        <taxon>Murinae</taxon>
        <taxon>Rattus</taxon>
    </lineage>
</organism>
<protein>
    <recommendedName>
        <fullName>Microtubule-associated protein 1B</fullName>
        <shortName>MAP-1B</shortName>
    </recommendedName>
    <alternativeName>
        <fullName>Neuraxin</fullName>
    </alternativeName>
    <component>
        <recommendedName>
            <fullName>MAP1B heavy chain</fullName>
        </recommendedName>
    </component>
    <component>
        <recommendedName>
            <fullName>MAP1 light chain LC1</fullName>
        </recommendedName>
    </component>
</protein>